<proteinExistence type="evidence at protein level"/>
<organism>
    <name type="scientific">Malus domestica</name>
    <name type="common">Apple</name>
    <name type="synonym">Pyrus malus</name>
    <dbReference type="NCBI Taxonomy" id="3750"/>
    <lineage>
        <taxon>Eukaryota</taxon>
        <taxon>Viridiplantae</taxon>
        <taxon>Streptophyta</taxon>
        <taxon>Embryophyta</taxon>
        <taxon>Tracheophyta</taxon>
        <taxon>Spermatophyta</taxon>
        <taxon>Magnoliopsida</taxon>
        <taxon>eudicotyledons</taxon>
        <taxon>Gunneridae</taxon>
        <taxon>Pentapetalae</taxon>
        <taxon>rosids</taxon>
        <taxon>fabids</taxon>
        <taxon>Rosales</taxon>
        <taxon>Rosaceae</taxon>
        <taxon>Amygdaloideae</taxon>
        <taxon>Maleae</taxon>
        <taxon>Malus</taxon>
    </lineage>
</organism>
<accession>A0A0E3T3B5</accession>
<sequence>MAIQIPSRQLFIDGEWREPVLKKRIPIINPATEQIIGDIPAATAEDVEIAVEAARKALARNKGRDWALAPGAVRAKYLRAIAAKIAERKSEIAKLEAIDCGKPLDEAAWDIDDVSGCFEYYADLAEGLDAQQKTPISLPMEQFKSHVLKEPIGVVGLITPWNYPLLMATWKVAPALAAGCAAILKPSELASVTCLELADVCREVGLPPGVLNILTGLGHEAGAPLASHPHVDKIAFTGSTMTGSKIMTAAAQLVKPVSLELGGKSPIVVFDDVDIDKAAEWTAFGIFWTNGQICSATSRLIIHENIAAKFLDRLVQWCKNIKIADPLEEGCRLGPVVSGGQYEKILKFIATAKSEGARVLSGGARPEHLKKGFFIEPTIITDVTTSMQIWREEVFGPVLCVKTFSSEDEALELANDSHYGLGAAVISKDLERCERVSKALQAGIVWINCSQPCFCQAPWGGNKRSGFGRELGKWGLDNYLTVKQVTEYVSDDPWGWYKSPSKL</sequence>
<dbReference type="EC" id="1.2.1.-" evidence="6"/>
<dbReference type="EC" id="1.2.1.19" evidence="6"/>
<dbReference type="EMBL" id="KP218041">
    <property type="protein sequence ID" value="AKC00600.1"/>
    <property type="molecule type" value="mRNA"/>
</dbReference>
<dbReference type="RefSeq" id="NP_001315965.1">
    <property type="nucleotide sequence ID" value="NM_001329036.1"/>
</dbReference>
<dbReference type="SMR" id="A0A0E3T3B5"/>
<dbReference type="EnsemblPlants" id="mRNA:MD14G0162800">
    <property type="protein sequence ID" value="mRNA:MD14G0162800"/>
    <property type="gene ID" value="MD14G0162800"/>
</dbReference>
<dbReference type="GeneID" id="103455259"/>
<dbReference type="Gramene" id="mRNA:MD14G0162800">
    <property type="protein sequence ID" value="mRNA:MD14G0162800"/>
    <property type="gene ID" value="MD14G0162800"/>
</dbReference>
<dbReference type="KEGG" id="mdm:103455259"/>
<dbReference type="OrthoDB" id="310895at2759"/>
<dbReference type="BRENDA" id="1.2.1.19">
    <property type="organism ID" value="3164"/>
</dbReference>
<dbReference type="UniPathway" id="UPA00529">
    <property type="reaction ID" value="UER00386"/>
</dbReference>
<dbReference type="GO" id="GO:0005777">
    <property type="term" value="C:peroxisome"/>
    <property type="evidence" value="ECO:0000314"/>
    <property type="project" value="UniProtKB"/>
</dbReference>
<dbReference type="GO" id="GO:0102244">
    <property type="term" value="F:3-aminopropanal dehydrogenase (NAD+) activity"/>
    <property type="evidence" value="ECO:0007669"/>
    <property type="project" value="RHEA"/>
</dbReference>
<dbReference type="GO" id="GO:0019145">
    <property type="term" value="F:aminobutyraldehyde dehydrogenase (NAD+) activity"/>
    <property type="evidence" value="ECO:0000314"/>
    <property type="project" value="UniProtKB"/>
</dbReference>
<dbReference type="GO" id="GO:0046872">
    <property type="term" value="F:metal ion binding"/>
    <property type="evidence" value="ECO:0007669"/>
    <property type="project" value="UniProtKB-KW"/>
</dbReference>
<dbReference type="GO" id="GO:0110095">
    <property type="term" value="P:cellular detoxification of aldehyde"/>
    <property type="evidence" value="ECO:0000314"/>
    <property type="project" value="UniProtKB"/>
</dbReference>
<dbReference type="GO" id="GO:0019285">
    <property type="term" value="P:glycine betaine biosynthetic process from choline"/>
    <property type="evidence" value="ECO:0007669"/>
    <property type="project" value="UniProtKB-UniPathway"/>
</dbReference>
<dbReference type="CDD" id="cd07110">
    <property type="entry name" value="ALDH_F10_BADH"/>
    <property type="match status" value="1"/>
</dbReference>
<dbReference type="FunFam" id="3.40.309.10:FF:000012">
    <property type="entry name" value="Betaine aldehyde dehydrogenase"/>
    <property type="match status" value="1"/>
</dbReference>
<dbReference type="FunFam" id="3.40.605.10:FF:000007">
    <property type="entry name" value="NAD/NADP-dependent betaine aldehyde dehydrogenase"/>
    <property type="match status" value="1"/>
</dbReference>
<dbReference type="Gene3D" id="3.40.605.10">
    <property type="entry name" value="Aldehyde Dehydrogenase, Chain A, domain 1"/>
    <property type="match status" value="1"/>
</dbReference>
<dbReference type="Gene3D" id="3.40.309.10">
    <property type="entry name" value="Aldehyde Dehydrogenase, Chain A, domain 2"/>
    <property type="match status" value="1"/>
</dbReference>
<dbReference type="InterPro" id="IPR016161">
    <property type="entry name" value="Ald_DH/histidinol_DH"/>
</dbReference>
<dbReference type="InterPro" id="IPR016163">
    <property type="entry name" value="Ald_DH_C"/>
</dbReference>
<dbReference type="InterPro" id="IPR016160">
    <property type="entry name" value="Ald_DH_CS_CYS"/>
</dbReference>
<dbReference type="InterPro" id="IPR029510">
    <property type="entry name" value="Ald_DH_CS_GLU"/>
</dbReference>
<dbReference type="InterPro" id="IPR016162">
    <property type="entry name" value="Ald_DH_N"/>
</dbReference>
<dbReference type="InterPro" id="IPR015590">
    <property type="entry name" value="Aldehyde_DH_dom"/>
</dbReference>
<dbReference type="PANTHER" id="PTHR43860">
    <property type="entry name" value="BETAINE ALDEHYDE DEHYDROGENASE"/>
    <property type="match status" value="1"/>
</dbReference>
<dbReference type="PANTHER" id="PTHR43860:SF2">
    <property type="entry name" value="BETAINE ALDEHYDE DEHYDROGENASE-RELATED"/>
    <property type="match status" value="1"/>
</dbReference>
<dbReference type="Pfam" id="PF00171">
    <property type="entry name" value="Aldedh"/>
    <property type="match status" value="1"/>
</dbReference>
<dbReference type="SUPFAM" id="SSF53720">
    <property type="entry name" value="ALDH-like"/>
    <property type="match status" value="1"/>
</dbReference>
<dbReference type="PROSITE" id="PS00070">
    <property type="entry name" value="ALDEHYDE_DEHYDR_CYS"/>
    <property type="match status" value="1"/>
</dbReference>
<dbReference type="PROSITE" id="PS00687">
    <property type="entry name" value="ALDEHYDE_DEHYDR_GLU"/>
    <property type="match status" value="1"/>
</dbReference>
<name>AADH2_MALDO</name>
<feature type="chain" id="PRO_0000454132" description="Aminoaldehyde dehydrogenase 2, peroxisomal">
    <location>
        <begin position="1"/>
        <end position="503"/>
    </location>
</feature>
<feature type="short sequence motif" description="Microbody targeting signal" evidence="3">
    <location>
        <begin position="501"/>
        <end position="503"/>
    </location>
</feature>
<feature type="active site" description="Proton acceptor" evidence="4">
    <location>
        <position position="260"/>
    </location>
</feature>
<feature type="active site" description="Nucleophile" evidence="5">
    <location>
        <position position="294"/>
    </location>
</feature>
<feature type="binding site" evidence="2">
    <location>
        <position position="28"/>
    </location>
    <ligand>
        <name>Na(+)</name>
        <dbReference type="ChEBI" id="CHEBI:29101"/>
    </ligand>
</feature>
<feature type="binding site" evidence="2">
    <location>
        <position position="99"/>
    </location>
    <ligand>
        <name>Na(+)</name>
        <dbReference type="ChEBI" id="CHEBI:29101"/>
    </ligand>
</feature>
<feature type="binding site" evidence="2">
    <location>
        <position position="189"/>
    </location>
    <ligand>
        <name>Na(+)</name>
        <dbReference type="ChEBI" id="CHEBI:29101"/>
    </ligand>
</feature>
<feature type="binding site" evidence="2">
    <location>
        <begin position="238"/>
        <end position="245"/>
    </location>
    <ligand>
        <name>NAD(+)</name>
        <dbReference type="ChEBI" id="CHEBI:57540"/>
    </ligand>
</feature>
<feature type="binding site" evidence="2">
    <location>
        <position position="294"/>
    </location>
    <ligand>
        <name>NAD(+)</name>
        <dbReference type="ChEBI" id="CHEBI:57540"/>
    </ligand>
</feature>
<feature type="binding site" evidence="2">
    <location>
        <position position="393"/>
    </location>
    <ligand>
        <name>NAD(+)</name>
        <dbReference type="ChEBI" id="CHEBI:57540"/>
    </ligand>
</feature>
<feature type="site" description="Transition state stabilizer" evidence="1">
    <location>
        <position position="162"/>
    </location>
</feature>
<protein>
    <recommendedName>
        <fullName evidence="7">Aminoaldehyde dehydrogenase 2, peroxisomal</fullName>
        <shortName evidence="7">MdAMADH2</shortName>
        <ecNumber evidence="6">1.2.1.-</ecNumber>
    </recommendedName>
    <alternativeName>
        <fullName evidence="8">Aminobutyraldehyde dehydrogenase AMADH2</fullName>
        <ecNumber evidence="6">1.2.1.19</ecNumber>
    </alternativeName>
</protein>
<gene>
    <name evidence="7" type="primary">AMADH2</name>
</gene>
<evidence type="ECO:0000250" key="1">
    <source>
        <dbReference type="UniProtKB" id="P20000"/>
    </source>
</evidence>
<evidence type="ECO:0000250" key="2">
    <source>
        <dbReference type="UniProtKB" id="Q8VWZ1"/>
    </source>
</evidence>
<evidence type="ECO:0000255" key="3"/>
<evidence type="ECO:0000255" key="4">
    <source>
        <dbReference type="PROSITE-ProRule" id="PRU10007"/>
    </source>
</evidence>
<evidence type="ECO:0000255" key="5">
    <source>
        <dbReference type="PROSITE-ProRule" id="PRU10008"/>
    </source>
</evidence>
<evidence type="ECO:0000269" key="6">
    <source>
    </source>
</evidence>
<evidence type="ECO:0000303" key="7">
    <source>
    </source>
</evidence>
<evidence type="ECO:0000305" key="8"/>
<reference key="1">
    <citation type="journal article" date="2015" name="FEBS Lett.">
        <title>NAD(+)-aminoaldehyde dehydrogenase candidates for 4-aminobutyrate (GABA) and beta-alanine production during terminal oxidation of polyamines in apple fruit.</title>
        <authorList>
            <person name="Zarei A."/>
            <person name="Trobacher C.P."/>
            <person name="Shelp B.J."/>
        </authorList>
    </citation>
    <scope>NUCLEOTIDE SEQUENCE [MRNA]</scope>
    <scope>FUNCTION</scope>
    <scope>CATALYTIC ACTIVITY</scope>
    <scope>BIOPHYSICOCHEMICAL PROPERTIES</scope>
    <scope>SUBCELLULAR LOCATION</scope>
</reference>
<comment type="function">
    <text evidence="6 8">Dehydrogenase that catalyzes the oxidation of several aminoaldehydes (PubMed:26296314). Metabolizes and detoxifies aldehyde products of polyamine degradation to non-toxic amino acids (Probable). Catalyzes the oxidation of 4-aminobutanal and 3-aminopropanal to 4-aminobutanoate and beta-alanine, respectively (PubMed:26296314).</text>
</comment>
<comment type="catalytic activity">
    <reaction evidence="6">
        <text>4-aminobutanal + NAD(+) + H2O = 4-aminobutanoate + NADH + 2 H(+)</text>
        <dbReference type="Rhea" id="RHEA:19105"/>
        <dbReference type="ChEBI" id="CHEBI:15377"/>
        <dbReference type="ChEBI" id="CHEBI:15378"/>
        <dbReference type="ChEBI" id="CHEBI:57540"/>
        <dbReference type="ChEBI" id="CHEBI:57945"/>
        <dbReference type="ChEBI" id="CHEBI:58264"/>
        <dbReference type="ChEBI" id="CHEBI:59888"/>
        <dbReference type="EC" id="1.2.1.19"/>
    </reaction>
    <physiologicalReaction direction="left-to-right" evidence="6">
        <dbReference type="Rhea" id="RHEA:19106"/>
    </physiologicalReaction>
</comment>
<comment type="catalytic activity">
    <reaction evidence="6">
        <text>3-aminopropanal + NAD(+) + H2O = beta-alanine + NADH + 2 H(+)</text>
        <dbReference type="Rhea" id="RHEA:30695"/>
        <dbReference type="ChEBI" id="CHEBI:15377"/>
        <dbReference type="ChEBI" id="CHEBI:15378"/>
        <dbReference type="ChEBI" id="CHEBI:57540"/>
        <dbReference type="ChEBI" id="CHEBI:57945"/>
        <dbReference type="ChEBI" id="CHEBI:57966"/>
        <dbReference type="ChEBI" id="CHEBI:58374"/>
    </reaction>
    <physiologicalReaction direction="left-to-right" evidence="6">
        <dbReference type="Rhea" id="RHEA:30696"/>
    </physiologicalReaction>
</comment>
<comment type="biophysicochemical properties">
    <kinetics>
        <KM evidence="6">160 uM for 4-aminobutanal</KM>
        <KM evidence="6">8.2 uM for 3-aminopropanal</KM>
        <KM evidence="6">82.8 uM for NAD(+) with 3-aminopropanal as substrate</KM>
        <Vmax evidence="6">1.9 umol/min/mg enzyme with 4-aminobutanal as substrate</Vmax>
        <Vmax evidence="6">11.2 umol/min/mg enzyme with 3-aminopropanal as substrate</Vmax>
        <Vmax evidence="6">20.9 umol/min/mg enzyme toward NAD(+) in presence of 3-aminopropanal</Vmax>
    </kinetics>
    <phDependence>
        <text evidence="6">Optimum pH is 9.75 with 4-aminobutanal as substrate.</text>
    </phDependence>
</comment>
<comment type="pathway">
    <text evidence="8">Amine and polyamine biosynthesis; betaine biosynthesis via choline pathway; betaine from betaine aldehyde: step 1/1.</text>
</comment>
<comment type="subcellular location">
    <subcellularLocation>
        <location evidence="6">Peroxisome</location>
    </subcellularLocation>
</comment>
<comment type="tissue specificity">
    <text evidence="6">Expressed in leaves, flowers and fruits.</text>
</comment>
<comment type="similarity">
    <text evidence="8">Belongs to the aldehyde dehydrogenase family.</text>
</comment>
<keyword id="KW-0479">Metal-binding</keyword>
<keyword id="KW-0520">NAD</keyword>
<keyword id="KW-0560">Oxidoreductase</keyword>
<keyword id="KW-0576">Peroxisome</keyword>
<keyword id="KW-0915">Sodium</keyword>